<organism>
    <name type="scientific">Bacillus amyloliquefaciens</name>
    <name type="common">Bacillus velezensis</name>
    <dbReference type="NCBI Taxonomy" id="1390"/>
    <lineage>
        <taxon>Bacteria</taxon>
        <taxon>Bacillati</taxon>
        <taxon>Bacillota</taxon>
        <taxon>Bacilli</taxon>
        <taxon>Bacillales</taxon>
        <taxon>Bacillaceae</taxon>
        <taxon>Bacillus</taxon>
        <taxon>Bacillus amyloliquefaciens group</taxon>
    </lineage>
</organism>
<evidence type="ECO:0000250" key="1"/>
<evidence type="ECO:0000255" key="2"/>
<evidence type="ECO:0000305" key="3"/>
<reference key="1">
    <citation type="journal article" date="1995" name="Biochim. Biophys. Acta">
        <title>Bacillus amyloliquefaciens possesses a second type I signal peptidase with extensive sequence similarity to other Bacillus SPases.</title>
        <authorList>
            <person name="Hoang V."/>
            <person name="Hofemeister J."/>
        </authorList>
    </citation>
    <scope>NUCLEOTIDE SEQUENCE [GENOMIC DNA]</scope>
    <source>
        <strain>ATCC 23844 / P</strain>
    </source>
</reference>
<dbReference type="EC" id="3.4.21.89"/>
<dbReference type="EMBL" id="Z33640">
    <property type="protein sequence ID" value="CAA83921.1"/>
    <property type="molecule type" value="Genomic_DNA"/>
</dbReference>
<dbReference type="PIR" id="S59966">
    <property type="entry name" value="S45022"/>
</dbReference>
<dbReference type="SMR" id="P41025"/>
<dbReference type="STRING" id="692420.BAMF_1515"/>
<dbReference type="MEROPS" id="S26.004"/>
<dbReference type="eggNOG" id="COG0681">
    <property type="taxonomic scope" value="Bacteria"/>
</dbReference>
<dbReference type="OMA" id="IEEAYLY"/>
<dbReference type="OrthoDB" id="9802919at2"/>
<dbReference type="GO" id="GO:0005886">
    <property type="term" value="C:plasma membrane"/>
    <property type="evidence" value="ECO:0007669"/>
    <property type="project" value="UniProtKB-SubCell"/>
</dbReference>
<dbReference type="GO" id="GO:0004252">
    <property type="term" value="F:serine-type endopeptidase activity"/>
    <property type="evidence" value="ECO:0007669"/>
    <property type="project" value="UniProtKB-EC"/>
</dbReference>
<dbReference type="GO" id="GO:0006465">
    <property type="term" value="P:signal peptide processing"/>
    <property type="evidence" value="ECO:0007669"/>
    <property type="project" value="InterPro"/>
</dbReference>
<dbReference type="CDD" id="cd06530">
    <property type="entry name" value="S26_SPase_I"/>
    <property type="match status" value="1"/>
</dbReference>
<dbReference type="FunFam" id="2.10.109.10:FF:000008">
    <property type="entry name" value="Signal peptidase I"/>
    <property type="match status" value="1"/>
</dbReference>
<dbReference type="Gene3D" id="2.10.109.10">
    <property type="entry name" value="Umud Fragment, subunit A"/>
    <property type="match status" value="1"/>
</dbReference>
<dbReference type="InterPro" id="IPR036286">
    <property type="entry name" value="LexA/Signal_pep-like_sf"/>
</dbReference>
<dbReference type="InterPro" id="IPR000223">
    <property type="entry name" value="Pept_S26A_signal_pept_1"/>
</dbReference>
<dbReference type="InterPro" id="IPR019758">
    <property type="entry name" value="Pept_S26A_signal_pept_1_CS"/>
</dbReference>
<dbReference type="InterPro" id="IPR019757">
    <property type="entry name" value="Pept_S26A_signal_pept_1_Lys-AS"/>
</dbReference>
<dbReference type="InterPro" id="IPR019756">
    <property type="entry name" value="Pept_S26A_signal_pept_1_Ser-AS"/>
</dbReference>
<dbReference type="InterPro" id="IPR019533">
    <property type="entry name" value="Peptidase_S26"/>
</dbReference>
<dbReference type="NCBIfam" id="TIGR02227">
    <property type="entry name" value="sigpep_I_bact"/>
    <property type="match status" value="1"/>
</dbReference>
<dbReference type="PANTHER" id="PTHR43390:SF1">
    <property type="entry name" value="CHLOROPLAST PROCESSING PEPTIDASE"/>
    <property type="match status" value="1"/>
</dbReference>
<dbReference type="PANTHER" id="PTHR43390">
    <property type="entry name" value="SIGNAL PEPTIDASE I"/>
    <property type="match status" value="1"/>
</dbReference>
<dbReference type="Pfam" id="PF10502">
    <property type="entry name" value="Peptidase_S26"/>
    <property type="match status" value="1"/>
</dbReference>
<dbReference type="PRINTS" id="PR00727">
    <property type="entry name" value="LEADERPTASE"/>
</dbReference>
<dbReference type="SUPFAM" id="SSF51306">
    <property type="entry name" value="LexA/Signal peptidase"/>
    <property type="match status" value="1"/>
</dbReference>
<dbReference type="PROSITE" id="PS00501">
    <property type="entry name" value="SPASE_I_1"/>
    <property type="match status" value="1"/>
</dbReference>
<dbReference type="PROSITE" id="PS00760">
    <property type="entry name" value="SPASE_I_2"/>
    <property type="match status" value="1"/>
</dbReference>
<dbReference type="PROSITE" id="PS00761">
    <property type="entry name" value="SPASE_I_3"/>
    <property type="match status" value="1"/>
</dbReference>
<comment type="catalytic activity">
    <reaction>
        <text>Cleavage of hydrophobic, N-terminal signal or leader sequences from secreted and periplasmic proteins.</text>
        <dbReference type="EC" id="3.4.21.89"/>
    </reaction>
</comment>
<comment type="subcellular location">
    <subcellularLocation>
        <location evidence="3">Cell membrane</location>
        <topology evidence="3">Single-pass type II membrane protein</topology>
    </subcellularLocation>
</comment>
<comment type="similarity">
    <text evidence="3">Belongs to the peptidase S26 family.</text>
</comment>
<protein>
    <recommendedName>
        <fullName>Signal peptidase I</fullName>
        <shortName>SPase I</shortName>
        <ecNumber>3.4.21.89</ecNumber>
    </recommendedName>
    <alternativeName>
        <fullName>Leader peptidase I</fullName>
    </alternativeName>
</protein>
<sequence>MTEEQKPTSEKSVKRKSNTYWEWGKAIIIAVALALLIRHFLFEPYLVEGSSMYPTLHDGERLFVNKSVNYIGEIERGDIVIINGDTSKVHYVKRLIGKPGETVEMKNDTLYINGKKIAEPYLASNKKEAKKLGVNLTGDFGPVKVPKGKYFVMGDNRLNSMDSRNGLGLIAENRIVGTSKFVFFPFHDMRQTK</sequence>
<feature type="chain" id="PRO_0000109494" description="Signal peptidase I">
    <location>
        <begin position="1"/>
        <end position="193"/>
    </location>
</feature>
<feature type="topological domain" description="Cytoplasmic" evidence="2">
    <location>
        <begin position="1"/>
        <end position="25"/>
    </location>
</feature>
<feature type="transmembrane region" description="Helical" evidence="2">
    <location>
        <begin position="26"/>
        <end position="42"/>
    </location>
</feature>
<feature type="topological domain" description="Extracellular" evidence="2">
    <location>
        <begin position="43"/>
        <end position="193"/>
    </location>
</feature>
<feature type="active site" evidence="1">
    <location>
        <position position="51"/>
    </location>
</feature>
<feature type="active site" evidence="1">
    <location>
        <position position="93"/>
    </location>
</feature>
<keyword id="KW-1003">Cell membrane</keyword>
<keyword id="KW-0378">Hydrolase</keyword>
<keyword id="KW-0472">Membrane</keyword>
<keyword id="KW-0645">Protease</keyword>
<keyword id="KW-0812">Transmembrane</keyword>
<keyword id="KW-1133">Transmembrane helix</keyword>
<accession>P41025</accession>
<proteinExistence type="inferred from homology"/>
<gene>
    <name type="primary">sipS2</name>
    <name type="synonym">sip</name>
</gene>
<name>LEP2_BACAM</name>